<protein>
    <recommendedName>
        <fullName evidence="1">ATP synthase subunit beta</fullName>
        <ecNumber evidence="1">7.1.2.2</ecNumber>
    </recommendedName>
    <alternativeName>
        <fullName evidence="1">ATP synthase F1 sector subunit beta</fullName>
    </alternativeName>
    <alternativeName>
        <fullName evidence="1">F-ATPase subunit beta</fullName>
    </alternativeName>
</protein>
<proteinExistence type="inferred from homology"/>
<keyword id="KW-0066">ATP synthesis</keyword>
<keyword id="KW-0067">ATP-binding</keyword>
<keyword id="KW-0997">Cell inner membrane</keyword>
<keyword id="KW-1003">Cell membrane</keyword>
<keyword id="KW-0139">CF(1)</keyword>
<keyword id="KW-0375">Hydrogen ion transport</keyword>
<keyword id="KW-0406">Ion transport</keyword>
<keyword id="KW-0472">Membrane</keyword>
<keyword id="KW-0547">Nucleotide-binding</keyword>
<keyword id="KW-1278">Translocase</keyword>
<keyword id="KW-0813">Transport</keyword>
<feature type="chain" id="PRO_1000143468" description="ATP synthase subunit beta">
    <location>
        <begin position="1"/>
        <end position="461"/>
    </location>
</feature>
<feature type="binding site" evidence="1">
    <location>
        <begin position="151"/>
        <end position="158"/>
    </location>
    <ligand>
        <name>ATP</name>
        <dbReference type="ChEBI" id="CHEBI:30616"/>
    </ligand>
</feature>
<comment type="function">
    <text evidence="1">Produces ATP from ADP in the presence of a proton gradient across the membrane. The catalytic sites are hosted primarily by the beta subunits.</text>
</comment>
<comment type="catalytic activity">
    <reaction evidence="1">
        <text>ATP + H2O + 4 H(+)(in) = ADP + phosphate + 5 H(+)(out)</text>
        <dbReference type="Rhea" id="RHEA:57720"/>
        <dbReference type="ChEBI" id="CHEBI:15377"/>
        <dbReference type="ChEBI" id="CHEBI:15378"/>
        <dbReference type="ChEBI" id="CHEBI:30616"/>
        <dbReference type="ChEBI" id="CHEBI:43474"/>
        <dbReference type="ChEBI" id="CHEBI:456216"/>
        <dbReference type="EC" id="7.1.2.2"/>
    </reaction>
</comment>
<comment type="subunit">
    <text evidence="1">F-type ATPases have 2 components, CF(1) - the catalytic core - and CF(0) - the membrane proton channel. CF(1) has five subunits: alpha(3), beta(3), gamma(1), delta(1), epsilon(1). CF(0) has three main subunits: a(1), b(2) and c(9-12). The alpha and beta chains form an alternating ring which encloses part of the gamma chain. CF(1) is attached to CF(0) by a central stalk formed by the gamma and epsilon chains, while a peripheral stalk is formed by the delta and b chains.</text>
</comment>
<comment type="subcellular location">
    <subcellularLocation>
        <location evidence="1">Cell inner membrane</location>
        <topology evidence="1">Peripheral membrane protein</topology>
    </subcellularLocation>
</comment>
<comment type="similarity">
    <text evidence="1">Belongs to the ATPase alpha/beta chains family.</text>
</comment>
<evidence type="ECO:0000255" key="1">
    <source>
        <dbReference type="HAMAP-Rule" id="MF_01347"/>
    </source>
</evidence>
<reference key="1">
    <citation type="journal article" date="2008" name="ISME J.">
        <title>Comparative genomics of two ecotypes of the marine planktonic copiotroph Alteromonas macleodii suggests alternative lifestyles associated with different kinds of particulate organic matter.</title>
        <authorList>
            <person name="Ivars-Martinez E."/>
            <person name="Martin-Cuadrado A.-B."/>
            <person name="D'Auria G."/>
            <person name="Mira A."/>
            <person name="Ferriera S."/>
            <person name="Johnson J."/>
            <person name="Friedman R."/>
            <person name="Rodriguez-Valera F."/>
        </authorList>
    </citation>
    <scope>NUCLEOTIDE SEQUENCE [LARGE SCALE GENOMIC DNA]</scope>
    <source>
        <strain>DSM 17117 / CIP 110805 / LMG 28347 / Deep ecotype</strain>
    </source>
</reference>
<name>ATPB_ALTMD</name>
<gene>
    <name evidence="1" type="primary">atpD</name>
    <name type="ordered locus">MADE_1020450</name>
</gene>
<accession>B4RS81</accession>
<accession>F2GCM6</accession>
<organism>
    <name type="scientific">Alteromonas mediterranea (strain DSM 17117 / CIP 110805 / LMG 28347 / Deep ecotype)</name>
    <dbReference type="NCBI Taxonomy" id="1774373"/>
    <lineage>
        <taxon>Bacteria</taxon>
        <taxon>Pseudomonadati</taxon>
        <taxon>Pseudomonadota</taxon>
        <taxon>Gammaproteobacteria</taxon>
        <taxon>Alteromonadales</taxon>
        <taxon>Alteromonadaceae</taxon>
        <taxon>Alteromonas/Salinimonas group</taxon>
        <taxon>Alteromonas</taxon>
    </lineage>
</organism>
<dbReference type="EC" id="7.1.2.2" evidence="1"/>
<dbReference type="EMBL" id="CP001103">
    <property type="protein sequence ID" value="AEB00213.1"/>
    <property type="molecule type" value="Genomic_DNA"/>
</dbReference>
<dbReference type="RefSeq" id="WP_012520216.1">
    <property type="nucleotide sequence ID" value="NC_011138.3"/>
</dbReference>
<dbReference type="SMR" id="B4RS81"/>
<dbReference type="KEGG" id="amc:MADE_1020450"/>
<dbReference type="HOGENOM" id="CLU_022398_0_2_6"/>
<dbReference type="Proteomes" id="UP000001870">
    <property type="component" value="Chromosome"/>
</dbReference>
<dbReference type="GO" id="GO:0005886">
    <property type="term" value="C:plasma membrane"/>
    <property type="evidence" value="ECO:0007669"/>
    <property type="project" value="UniProtKB-SubCell"/>
</dbReference>
<dbReference type="GO" id="GO:0045259">
    <property type="term" value="C:proton-transporting ATP synthase complex"/>
    <property type="evidence" value="ECO:0007669"/>
    <property type="project" value="UniProtKB-KW"/>
</dbReference>
<dbReference type="GO" id="GO:0005524">
    <property type="term" value="F:ATP binding"/>
    <property type="evidence" value="ECO:0007669"/>
    <property type="project" value="UniProtKB-UniRule"/>
</dbReference>
<dbReference type="GO" id="GO:0016887">
    <property type="term" value="F:ATP hydrolysis activity"/>
    <property type="evidence" value="ECO:0007669"/>
    <property type="project" value="InterPro"/>
</dbReference>
<dbReference type="GO" id="GO:0046933">
    <property type="term" value="F:proton-transporting ATP synthase activity, rotational mechanism"/>
    <property type="evidence" value="ECO:0007669"/>
    <property type="project" value="UniProtKB-UniRule"/>
</dbReference>
<dbReference type="CDD" id="cd18110">
    <property type="entry name" value="ATP-synt_F1_beta_C"/>
    <property type="match status" value="1"/>
</dbReference>
<dbReference type="CDD" id="cd18115">
    <property type="entry name" value="ATP-synt_F1_beta_N"/>
    <property type="match status" value="1"/>
</dbReference>
<dbReference type="CDD" id="cd01133">
    <property type="entry name" value="F1-ATPase_beta_CD"/>
    <property type="match status" value="1"/>
</dbReference>
<dbReference type="FunFam" id="1.10.1140.10:FF:000001">
    <property type="entry name" value="ATP synthase subunit beta"/>
    <property type="match status" value="1"/>
</dbReference>
<dbReference type="FunFam" id="2.40.10.170:FF:000003">
    <property type="entry name" value="ATP synthase subunit beta"/>
    <property type="match status" value="1"/>
</dbReference>
<dbReference type="FunFam" id="3.40.50.300:FF:000004">
    <property type="entry name" value="ATP synthase subunit beta"/>
    <property type="match status" value="1"/>
</dbReference>
<dbReference type="Gene3D" id="2.40.10.170">
    <property type="match status" value="1"/>
</dbReference>
<dbReference type="Gene3D" id="1.10.1140.10">
    <property type="entry name" value="Bovine Mitochondrial F1-atpase, Atp Synthase Beta Chain, Chain D, domain 3"/>
    <property type="match status" value="1"/>
</dbReference>
<dbReference type="Gene3D" id="3.40.50.300">
    <property type="entry name" value="P-loop containing nucleotide triphosphate hydrolases"/>
    <property type="match status" value="1"/>
</dbReference>
<dbReference type="HAMAP" id="MF_01347">
    <property type="entry name" value="ATP_synth_beta_bact"/>
    <property type="match status" value="1"/>
</dbReference>
<dbReference type="InterPro" id="IPR003593">
    <property type="entry name" value="AAA+_ATPase"/>
</dbReference>
<dbReference type="InterPro" id="IPR055190">
    <property type="entry name" value="ATP-synt_VA_C"/>
</dbReference>
<dbReference type="InterPro" id="IPR005722">
    <property type="entry name" value="ATP_synth_F1_bsu"/>
</dbReference>
<dbReference type="InterPro" id="IPR020003">
    <property type="entry name" value="ATPase_a/bsu_AS"/>
</dbReference>
<dbReference type="InterPro" id="IPR050053">
    <property type="entry name" value="ATPase_alpha/beta_chains"/>
</dbReference>
<dbReference type="InterPro" id="IPR004100">
    <property type="entry name" value="ATPase_F1/V1/A1_a/bsu_N"/>
</dbReference>
<dbReference type="InterPro" id="IPR036121">
    <property type="entry name" value="ATPase_F1/V1/A1_a/bsu_N_sf"/>
</dbReference>
<dbReference type="InterPro" id="IPR000194">
    <property type="entry name" value="ATPase_F1/V1/A1_a/bsu_nucl-bd"/>
</dbReference>
<dbReference type="InterPro" id="IPR024034">
    <property type="entry name" value="ATPase_F1/V1_b/a_C"/>
</dbReference>
<dbReference type="InterPro" id="IPR027417">
    <property type="entry name" value="P-loop_NTPase"/>
</dbReference>
<dbReference type="NCBIfam" id="TIGR01039">
    <property type="entry name" value="atpD"/>
    <property type="match status" value="1"/>
</dbReference>
<dbReference type="PANTHER" id="PTHR15184">
    <property type="entry name" value="ATP SYNTHASE"/>
    <property type="match status" value="1"/>
</dbReference>
<dbReference type="PANTHER" id="PTHR15184:SF71">
    <property type="entry name" value="ATP SYNTHASE SUBUNIT BETA, MITOCHONDRIAL"/>
    <property type="match status" value="1"/>
</dbReference>
<dbReference type="Pfam" id="PF00006">
    <property type="entry name" value="ATP-synt_ab"/>
    <property type="match status" value="1"/>
</dbReference>
<dbReference type="Pfam" id="PF02874">
    <property type="entry name" value="ATP-synt_ab_N"/>
    <property type="match status" value="1"/>
</dbReference>
<dbReference type="Pfam" id="PF22919">
    <property type="entry name" value="ATP-synt_VA_C"/>
    <property type="match status" value="1"/>
</dbReference>
<dbReference type="SMART" id="SM00382">
    <property type="entry name" value="AAA"/>
    <property type="match status" value="1"/>
</dbReference>
<dbReference type="SUPFAM" id="SSF47917">
    <property type="entry name" value="C-terminal domain of alpha and beta subunits of F1 ATP synthase"/>
    <property type="match status" value="1"/>
</dbReference>
<dbReference type="SUPFAM" id="SSF50615">
    <property type="entry name" value="N-terminal domain of alpha and beta subunits of F1 ATP synthase"/>
    <property type="match status" value="1"/>
</dbReference>
<dbReference type="SUPFAM" id="SSF52540">
    <property type="entry name" value="P-loop containing nucleoside triphosphate hydrolases"/>
    <property type="match status" value="1"/>
</dbReference>
<dbReference type="PROSITE" id="PS00152">
    <property type="entry name" value="ATPASE_ALPHA_BETA"/>
    <property type="match status" value="1"/>
</dbReference>
<sequence length="461" mass="49978">MSQGKVVQIIGAVVDIEFPQDAVPRVYDALRVTEGDLSGLTLEVQQQLGGGVVRGIALGTTDGLKRGLTVENTGNPIMVPVGTKTLGRIMDVLGNPIDEAGPIGEEERMSIHREAPSYEDQSSSVELLETGIKVIDLVCPFAKGGKVGLFGGAGVGKTVNMMELIRNIAIEHSGFSVFAGVGERTREGNDFYHEMNDSNVLDKVSLVYGQMNEPPGNRLRVALTGLTMAEKFRDEGRDVLFFVDNIYRYTLAGTEVSALLGRMPSAVGYQPTLAEEMGVLQERITSTKTGSITSIQAVYVPADDLTDPSPATTFAHLDATVVLSRDIASLGIYPAVDPLDSTSRQLDPLVIGQEHYDVARGVQTVLQRYKELKDIIAILGMDELSEEDKQVVSRARKIQRFLSQPFFVAEVFTGAPGKYVSLKDTISGFKGILDGEYDHLPEQAFYMVGSIEEALEKAKKA</sequence>